<keyword id="KW-0175">Coiled coil</keyword>
<keyword id="KW-0539">Nucleus</keyword>
<keyword id="KW-0597">Phosphoprotein</keyword>
<keyword id="KW-0687">Ribonucleoprotein</keyword>
<keyword id="KW-0690">Ribosome biogenesis</keyword>
<keyword id="KW-0698">rRNA processing</keyword>
<organism>
    <name type="scientific">Saccharomyces cerevisiae (strain YJM789)</name>
    <name type="common">Baker's yeast</name>
    <dbReference type="NCBI Taxonomy" id="307796"/>
    <lineage>
        <taxon>Eukaryota</taxon>
        <taxon>Fungi</taxon>
        <taxon>Dikarya</taxon>
        <taxon>Ascomycota</taxon>
        <taxon>Saccharomycotina</taxon>
        <taxon>Saccharomycetes</taxon>
        <taxon>Saccharomycetales</taxon>
        <taxon>Saccharomycetaceae</taxon>
        <taxon>Saccharomyces</taxon>
    </lineage>
</organism>
<reference key="1">
    <citation type="journal article" date="2007" name="Proc. Natl. Acad. Sci. U.S.A.">
        <title>Genome sequencing and comparative analysis of Saccharomyces cerevisiae strain YJM789.</title>
        <authorList>
            <person name="Wei W."/>
            <person name="McCusker J.H."/>
            <person name="Hyman R.W."/>
            <person name="Jones T."/>
            <person name="Ning Y."/>
            <person name="Cao Z."/>
            <person name="Gu Z."/>
            <person name="Bruno D."/>
            <person name="Miranda M."/>
            <person name="Nguyen M."/>
            <person name="Wilhelmy J."/>
            <person name="Komp C."/>
            <person name="Tamse R."/>
            <person name="Wang X."/>
            <person name="Jia P."/>
            <person name="Luedi P."/>
            <person name="Oefner P.J."/>
            <person name="David L."/>
            <person name="Dietrich F.S."/>
            <person name="Li Y."/>
            <person name="Davis R.W."/>
            <person name="Steinmetz L.M."/>
        </authorList>
    </citation>
    <scope>NUCLEOTIDE SEQUENCE [LARGE SCALE GENOMIC DNA]</scope>
    <source>
        <strain>YJM789</strain>
    </source>
</reference>
<feature type="chain" id="PRO_0000397659" description="rRNA biogenesis protein RRP36">
    <location>
        <begin position="1"/>
        <end position="300"/>
    </location>
</feature>
<feature type="region of interest" description="Disordered" evidence="4">
    <location>
        <begin position="33"/>
        <end position="146"/>
    </location>
</feature>
<feature type="coiled-coil region" evidence="3">
    <location>
        <begin position="203"/>
        <end position="248"/>
    </location>
</feature>
<feature type="compositionally biased region" description="Acidic residues" evidence="4">
    <location>
        <begin position="85"/>
        <end position="109"/>
    </location>
</feature>
<feature type="compositionally biased region" description="Basic residues" evidence="4">
    <location>
        <begin position="114"/>
        <end position="124"/>
    </location>
</feature>
<feature type="modified residue" description="Phosphoserine" evidence="2">
    <location>
        <position position="14"/>
    </location>
</feature>
<feature type="modified residue" description="Phosphoserine" evidence="2">
    <location>
        <position position="41"/>
    </location>
</feature>
<feature type="modified residue" description="Phosphoserine" evidence="2">
    <location>
        <position position="42"/>
    </location>
</feature>
<gene>
    <name type="primary">RRP36</name>
    <name type="ORF">SCY_5337</name>
</gene>
<accession>A6ZPC2</accession>
<name>RRP36_YEAS7</name>
<evidence type="ECO:0000250" key="1"/>
<evidence type="ECO:0000250" key="2">
    <source>
        <dbReference type="UniProtKB" id="Q12481"/>
    </source>
</evidence>
<evidence type="ECO:0000255" key="3"/>
<evidence type="ECO:0000256" key="4">
    <source>
        <dbReference type="SAM" id="MobiDB-lite"/>
    </source>
</evidence>
<evidence type="ECO:0000305" key="5"/>
<protein>
    <recommendedName>
        <fullName>rRNA biogenesis protein RRP36</fullName>
    </recommendedName>
    <alternativeName>
        <fullName>Ribosomal RNA-processing protein 36</fullName>
    </alternativeName>
</protein>
<proteinExistence type="inferred from homology"/>
<dbReference type="EMBL" id="AAFW02000032">
    <property type="protein sequence ID" value="EDN63612.1"/>
    <property type="molecule type" value="Genomic_DNA"/>
</dbReference>
<dbReference type="SMR" id="A6ZPC2"/>
<dbReference type="HOGENOM" id="CLU_048802_3_0_1"/>
<dbReference type="Proteomes" id="UP000007060">
    <property type="component" value="Unassembled WGS sequence"/>
</dbReference>
<dbReference type="GO" id="GO:0030686">
    <property type="term" value="C:90S preribosome"/>
    <property type="evidence" value="ECO:0007669"/>
    <property type="project" value="TreeGrafter"/>
</dbReference>
<dbReference type="GO" id="GO:0005730">
    <property type="term" value="C:nucleolus"/>
    <property type="evidence" value="ECO:0007669"/>
    <property type="project" value="UniProtKB-SubCell"/>
</dbReference>
<dbReference type="GO" id="GO:0000462">
    <property type="term" value="P:maturation of SSU-rRNA from tricistronic rRNA transcript (SSU-rRNA, 5.8S rRNA, LSU-rRNA)"/>
    <property type="evidence" value="ECO:0007669"/>
    <property type="project" value="TreeGrafter"/>
</dbReference>
<dbReference type="InterPro" id="IPR009292">
    <property type="entry name" value="RRP36"/>
</dbReference>
<dbReference type="PANTHER" id="PTHR21738">
    <property type="entry name" value="RIBOSOMAL RNA PROCESSING PROTEIN 36 HOMOLOG"/>
    <property type="match status" value="1"/>
</dbReference>
<dbReference type="PANTHER" id="PTHR21738:SF0">
    <property type="entry name" value="RIBOSOMAL RNA PROCESSING PROTEIN 36 HOMOLOG"/>
    <property type="match status" value="1"/>
</dbReference>
<dbReference type="Pfam" id="PF06102">
    <property type="entry name" value="RRP36"/>
    <property type="match status" value="1"/>
</dbReference>
<sequence>MSYYFKNLKPDLNSDVEEDDGNLLESIMANKSKREIDEQESSDDELKTLSFGSLKKAETVIDEEDFKDTKPVHKKPITTTYREESFDEDEDSEDQSDEDAGFFEEDSEDETHHGQKVPKKKSKHAPVEQSSKKRVPRVRNIPGLEIPRNKRSNLYRDIRFDKSTGKALDSSIIRKRYQFLDEYREKEIDELQKLLQDRKFLSKIDQGEREEMEQRLKSMKSRLQSMKNKDLEREILKEYENDMNKNNNTRYHLKKSEKRKVVQKWKFDHMKTKQREKVMERKRKKRLGKEFKQFEFHNRR</sequence>
<comment type="function">
    <text evidence="1">Component of the 90S pre-ribosome involved in the maturation of rRNAs. Required for early cleavages of the pre-RNAs in the 40S ribosomal subunit maturation pathway (By similarity).</text>
</comment>
<comment type="subunit">
    <text evidence="1">Associates with 90S and pre-40S pre-ribosomal particles. Interacts with CKA1, CKA2, CKB1, CKB2, PWP2, UTP15, UTP17 and UTP22 (By similarity).</text>
</comment>
<comment type="subcellular location">
    <subcellularLocation>
        <location evidence="1">Nucleus</location>
        <location evidence="1">Nucleolus</location>
    </subcellularLocation>
</comment>
<comment type="similarity">
    <text evidence="5">Belongs to the RRP36 family.</text>
</comment>